<proteinExistence type="inferred from homology"/>
<reference key="1">
    <citation type="journal article" date="2013" name="Stand. Genomic Sci.">
        <title>Complete genome sequence of Arthrobacter sp. strain FB24.</title>
        <authorList>
            <person name="Nakatsu C.H."/>
            <person name="Barabote R."/>
            <person name="Thompson S."/>
            <person name="Bruce D."/>
            <person name="Detter C."/>
            <person name="Brettin T."/>
            <person name="Han C."/>
            <person name="Beasley F."/>
            <person name="Chen W."/>
            <person name="Konopka A."/>
            <person name="Xie G."/>
        </authorList>
    </citation>
    <scope>NUCLEOTIDE SEQUENCE [LARGE SCALE GENOMIC DNA]</scope>
    <source>
        <strain>FB24</strain>
    </source>
</reference>
<evidence type="ECO:0000255" key="1">
    <source>
        <dbReference type="HAMAP-Rule" id="MF_00041"/>
    </source>
</evidence>
<evidence type="ECO:0000256" key="2">
    <source>
        <dbReference type="SAM" id="MobiDB-lite"/>
    </source>
</evidence>
<comment type="catalytic activity">
    <reaction evidence="1">
        <text>tRNA(Cys) + L-cysteine + ATP = L-cysteinyl-tRNA(Cys) + AMP + diphosphate</text>
        <dbReference type="Rhea" id="RHEA:17773"/>
        <dbReference type="Rhea" id="RHEA-COMP:9661"/>
        <dbReference type="Rhea" id="RHEA-COMP:9679"/>
        <dbReference type="ChEBI" id="CHEBI:30616"/>
        <dbReference type="ChEBI" id="CHEBI:33019"/>
        <dbReference type="ChEBI" id="CHEBI:35235"/>
        <dbReference type="ChEBI" id="CHEBI:78442"/>
        <dbReference type="ChEBI" id="CHEBI:78517"/>
        <dbReference type="ChEBI" id="CHEBI:456215"/>
        <dbReference type="EC" id="6.1.1.16"/>
    </reaction>
</comment>
<comment type="cofactor">
    <cofactor evidence="1">
        <name>Zn(2+)</name>
        <dbReference type="ChEBI" id="CHEBI:29105"/>
    </cofactor>
    <text evidence="1">Binds 1 zinc ion per subunit.</text>
</comment>
<comment type="subunit">
    <text evidence="1">Monomer.</text>
</comment>
<comment type="subcellular location">
    <subcellularLocation>
        <location evidence="1">Cytoplasm</location>
    </subcellularLocation>
</comment>
<comment type="similarity">
    <text evidence="1">Belongs to the class-I aminoacyl-tRNA synthetase family.</text>
</comment>
<sequence length="487" mass="53229">MRFYDTASAEVRDFVPLIPGKVSLYYCGATVQGLPHVGHIRSAIAFDQLTRWLEYRGFRVTVVRNVTDIDDKILAKSALSFEPDFEEGPDDVREEEWWALAYRYEQAFLKAYDTLGVSRPTYEPRATGHIPEMHALIQGLIDRGHAYPALDDSGDVYFDVRSWNRYGSLTRQKIDDMQGAPDADPRGKKDPRDFALWKGHKEGEPTTASWVSPWGTGRPGWHLECSAMVTKYLGTEFDIHGGGLDLRFPHHENEMAQSQAAGHAFANFWMHNGMVTYQGEKMSKSIGNTVSPAEMLELASPRVVRYYLGQAQYRSVLDYQPTSLQEAAAAVERIDGFIARAVRTLSGSVVSGAAELLFSSHGTVPDAFAAAMDDDLNVPQALAALHDTVRAGNTALTAGDNSAARTALHSVTDMLRVLGLNDVAAPARDEQADTALGVLVEAQLGARAQARATKDWAASDAIRDTLAAAGVVVEDGPDGASWSLKRG</sequence>
<gene>
    <name evidence="1" type="primary">cysS</name>
    <name type="ordered locus">Arth_0730</name>
</gene>
<feature type="chain" id="PRO_1000006562" description="Cysteine--tRNA ligase">
    <location>
        <begin position="1"/>
        <end position="487"/>
    </location>
</feature>
<feature type="region of interest" description="Disordered" evidence="2">
    <location>
        <begin position="174"/>
        <end position="194"/>
    </location>
</feature>
<feature type="short sequence motif" description="'HIGH' region">
    <location>
        <begin position="29"/>
        <end position="39"/>
    </location>
</feature>
<feature type="short sequence motif" description="'KMSKS' region">
    <location>
        <begin position="281"/>
        <end position="285"/>
    </location>
</feature>
<feature type="compositionally biased region" description="Basic and acidic residues" evidence="2">
    <location>
        <begin position="183"/>
        <end position="194"/>
    </location>
</feature>
<feature type="binding site" evidence="1">
    <location>
        <position position="27"/>
    </location>
    <ligand>
        <name>Zn(2+)</name>
        <dbReference type="ChEBI" id="CHEBI:29105"/>
    </ligand>
</feature>
<feature type="binding site" evidence="1">
    <location>
        <position position="225"/>
    </location>
    <ligand>
        <name>Zn(2+)</name>
        <dbReference type="ChEBI" id="CHEBI:29105"/>
    </ligand>
</feature>
<feature type="binding site" evidence="1">
    <location>
        <position position="250"/>
    </location>
    <ligand>
        <name>Zn(2+)</name>
        <dbReference type="ChEBI" id="CHEBI:29105"/>
    </ligand>
</feature>
<feature type="binding site" evidence="1">
    <location>
        <position position="254"/>
    </location>
    <ligand>
        <name>Zn(2+)</name>
        <dbReference type="ChEBI" id="CHEBI:29105"/>
    </ligand>
</feature>
<feature type="binding site" evidence="1">
    <location>
        <position position="284"/>
    </location>
    <ligand>
        <name>ATP</name>
        <dbReference type="ChEBI" id="CHEBI:30616"/>
    </ligand>
</feature>
<protein>
    <recommendedName>
        <fullName evidence="1">Cysteine--tRNA ligase</fullName>
        <ecNumber evidence="1">6.1.1.16</ecNumber>
    </recommendedName>
    <alternativeName>
        <fullName evidence="1">Cysteinyl-tRNA synthetase</fullName>
        <shortName evidence="1">CysRS</shortName>
    </alternativeName>
</protein>
<keyword id="KW-0030">Aminoacyl-tRNA synthetase</keyword>
<keyword id="KW-0067">ATP-binding</keyword>
<keyword id="KW-0963">Cytoplasm</keyword>
<keyword id="KW-0436">Ligase</keyword>
<keyword id="KW-0479">Metal-binding</keyword>
<keyword id="KW-0547">Nucleotide-binding</keyword>
<keyword id="KW-0648">Protein biosynthesis</keyword>
<keyword id="KW-1185">Reference proteome</keyword>
<keyword id="KW-0862">Zinc</keyword>
<dbReference type="EC" id="6.1.1.16" evidence="1"/>
<dbReference type="EMBL" id="CP000454">
    <property type="protein sequence ID" value="ABK02128.1"/>
    <property type="molecule type" value="Genomic_DNA"/>
</dbReference>
<dbReference type="SMR" id="A0JSV8"/>
<dbReference type="STRING" id="290399.Arth_0730"/>
<dbReference type="KEGG" id="art:Arth_0730"/>
<dbReference type="eggNOG" id="COG0215">
    <property type="taxonomic scope" value="Bacteria"/>
</dbReference>
<dbReference type="HOGENOM" id="CLU_013528_0_1_11"/>
<dbReference type="Proteomes" id="UP000000754">
    <property type="component" value="Chromosome"/>
</dbReference>
<dbReference type="GO" id="GO:0005829">
    <property type="term" value="C:cytosol"/>
    <property type="evidence" value="ECO:0007669"/>
    <property type="project" value="TreeGrafter"/>
</dbReference>
<dbReference type="GO" id="GO:0005524">
    <property type="term" value="F:ATP binding"/>
    <property type="evidence" value="ECO:0007669"/>
    <property type="project" value="UniProtKB-UniRule"/>
</dbReference>
<dbReference type="GO" id="GO:0004817">
    <property type="term" value="F:cysteine-tRNA ligase activity"/>
    <property type="evidence" value="ECO:0007669"/>
    <property type="project" value="UniProtKB-UniRule"/>
</dbReference>
<dbReference type="GO" id="GO:0008270">
    <property type="term" value="F:zinc ion binding"/>
    <property type="evidence" value="ECO:0007669"/>
    <property type="project" value="UniProtKB-UniRule"/>
</dbReference>
<dbReference type="GO" id="GO:0006423">
    <property type="term" value="P:cysteinyl-tRNA aminoacylation"/>
    <property type="evidence" value="ECO:0007669"/>
    <property type="project" value="UniProtKB-UniRule"/>
</dbReference>
<dbReference type="CDD" id="cd00672">
    <property type="entry name" value="CysRS_core"/>
    <property type="match status" value="1"/>
</dbReference>
<dbReference type="FunFam" id="3.40.50.620:FF:000068">
    <property type="entry name" value="Cysteine--tRNA ligase"/>
    <property type="match status" value="1"/>
</dbReference>
<dbReference type="Gene3D" id="1.20.120.1910">
    <property type="entry name" value="Cysteine-tRNA ligase, C-terminal anti-codon recognition domain"/>
    <property type="match status" value="1"/>
</dbReference>
<dbReference type="Gene3D" id="3.40.50.620">
    <property type="entry name" value="HUPs"/>
    <property type="match status" value="1"/>
</dbReference>
<dbReference type="HAMAP" id="MF_00041">
    <property type="entry name" value="Cys_tRNA_synth"/>
    <property type="match status" value="1"/>
</dbReference>
<dbReference type="InterPro" id="IPR015803">
    <property type="entry name" value="Cys-tRNA-ligase"/>
</dbReference>
<dbReference type="InterPro" id="IPR015273">
    <property type="entry name" value="Cys-tRNA-synt_Ia_DALR"/>
</dbReference>
<dbReference type="InterPro" id="IPR024909">
    <property type="entry name" value="Cys-tRNA/MSH_ligase"/>
</dbReference>
<dbReference type="InterPro" id="IPR056411">
    <property type="entry name" value="CysS_C"/>
</dbReference>
<dbReference type="InterPro" id="IPR014729">
    <property type="entry name" value="Rossmann-like_a/b/a_fold"/>
</dbReference>
<dbReference type="InterPro" id="IPR032678">
    <property type="entry name" value="tRNA-synt_1_cat_dom"/>
</dbReference>
<dbReference type="InterPro" id="IPR009080">
    <property type="entry name" value="tRNAsynth_Ia_anticodon-bd"/>
</dbReference>
<dbReference type="NCBIfam" id="TIGR00435">
    <property type="entry name" value="cysS"/>
    <property type="match status" value="1"/>
</dbReference>
<dbReference type="PANTHER" id="PTHR10890:SF30">
    <property type="entry name" value="CYSTEINE--TRNA LIGASE"/>
    <property type="match status" value="1"/>
</dbReference>
<dbReference type="PANTHER" id="PTHR10890">
    <property type="entry name" value="CYSTEINYL-TRNA SYNTHETASE"/>
    <property type="match status" value="1"/>
</dbReference>
<dbReference type="Pfam" id="PF23493">
    <property type="entry name" value="CysS_C"/>
    <property type="match status" value="1"/>
</dbReference>
<dbReference type="Pfam" id="PF09190">
    <property type="entry name" value="DALR_2"/>
    <property type="match status" value="1"/>
</dbReference>
<dbReference type="Pfam" id="PF01406">
    <property type="entry name" value="tRNA-synt_1e"/>
    <property type="match status" value="1"/>
</dbReference>
<dbReference type="PRINTS" id="PR00983">
    <property type="entry name" value="TRNASYNTHCYS"/>
</dbReference>
<dbReference type="SMART" id="SM00840">
    <property type="entry name" value="DALR_2"/>
    <property type="match status" value="1"/>
</dbReference>
<dbReference type="SUPFAM" id="SSF47323">
    <property type="entry name" value="Anticodon-binding domain of a subclass of class I aminoacyl-tRNA synthetases"/>
    <property type="match status" value="1"/>
</dbReference>
<dbReference type="SUPFAM" id="SSF52374">
    <property type="entry name" value="Nucleotidylyl transferase"/>
    <property type="match status" value="1"/>
</dbReference>
<accession>A0JSV8</accession>
<name>SYC_ARTS2</name>
<organism>
    <name type="scientific">Arthrobacter sp. (strain FB24)</name>
    <dbReference type="NCBI Taxonomy" id="290399"/>
    <lineage>
        <taxon>Bacteria</taxon>
        <taxon>Bacillati</taxon>
        <taxon>Actinomycetota</taxon>
        <taxon>Actinomycetes</taxon>
        <taxon>Micrococcales</taxon>
        <taxon>Micrococcaceae</taxon>
        <taxon>Arthrobacter</taxon>
    </lineage>
</organism>